<gene>
    <name evidence="12" type="primary">SLC39A1</name>
    <name type="synonym">IRT1</name>
    <name type="synonym">ZIP1</name>
    <name evidence="8" type="synonym">ZIRTL</name>
    <name type="ORF">CGI-08</name>
    <name type="ORF">CGI-71</name>
</gene>
<organism>
    <name type="scientific">Homo sapiens</name>
    <name type="common">Human</name>
    <dbReference type="NCBI Taxonomy" id="9606"/>
    <lineage>
        <taxon>Eukaryota</taxon>
        <taxon>Metazoa</taxon>
        <taxon>Chordata</taxon>
        <taxon>Craniata</taxon>
        <taxon>Vertebrata</taxon>
        <taxon>Euteleostomi</taxon>
        <taxon>Mammalia</taxon>
        <taxon>Eutheria</taxon>
        <taxon>Euarchontoglires</taxon>
        <taxon>Primates</taxon>
        <taxon>Haplorrhini</taxon>
        <taxon>Catarrhini</taxon>
        <taxon>Hominidae</taxon>
        <taxon>Homo</taxon>
    </lineage>
</organism>
<comment type="function">
    <text evidence="3 5 7">Transporter for the divalent cation Zn(2+). Mediates the influx of Zn(2+) into cells from extracellular space (PubMed:11301334, PubMed:12888280, PubMed:16844077). Functions as the major importer of zinc from circulating blood plasma into prostate cells (PubMed:12888280).</text>
</comment>
<comment type="catalytic activity">
    <reaction evidence="3 5 7">
        <text>Zn(2+)(in) = Zn(2+)(out)</text>
        <dbReference type="Rhea" id="RHEA:29351"/>
        <dbReference type="ChEBI" id="CHEBI:29105"/>
    </reaction>
    <physiologicalReaction direction="left-to-right" evidence="11">
        <dbReference type="Rhea" id="RHEA:29352"/>
    </physiologicalReaction>
</comment>
<comment type="activity regulation">
    <text evidence="3">Inhibited by Ni(2+) ions. Fe(2+) ions do not inhibit zinc uptake.</text>
</comment>
<comment type="biophysicochemical properties">
    <kinetics>
        <KM evidence="3">3.5 uM for Zn(2+)</KM>
    </kinetics>
</comment>
<comment type="interaction">
    <interactant intactId="EBI-726491">
        <id>Q9NY26</id>
    </interactant>
    <interactant intactId="EBI-372265">
        <id>P21964</id>
        <label>COMT</label>
    </interactant>
    <organismsDiffer>false</organismsDiffer>
    <experiments>3</experiments>
</comment>
<comment type="interaction">
    <interactant intactId="EBI-726491">
        <id>Q9NY26</id>
    </interactant>
    <interactant intactId="EBI-3911467">
        <id>Q07325</id>
        <label>CXCL9</label>
    </interactant>
    <organismsDiffer>false</organismsDiffer>
    <experiments>3</experiments>
</comment>
<comment type="interaction">
    <interactant intactId="EBI-726491">
        <id>Q9NY26</id>
    </interactant>
    <interactant intactId="EBI-8646596">
        <id>P49447</id>
        <label>CYB561</label>
    </interactant>
    <organismsDiffer>false</organismsDiffer>
    <experiments>3</experiments>
</comment>
<comment type="interaction">
    <interactant intactId="EBI-726491">
        <id>Q9NY26</id>
    </interactant>
    <interactant intactId="EBI-2558379">
        <id>O60361</id>
        <label>NME2P1</label>
    </interactant>
    <organismsDiffer>false</organismsDiffer>
    <experiments>2</experiments>
</comment>
<comment type="interaction">
    <interactant intactId="EBI-726491">
        <id>Q9NY26</id>
    </interactant>
    <interactant intactId="EBI-748974">
        <id>Q96CV9</id>
        <label>OPTN</label>
    </interactant>
    <organismsDiffer>false</organismsDiffer>
    <experiments>3</experiments>
</comment>
<comment type="interaction">
    <interactant intactId="EBI-726491">
        <id>Q9NY26</id>
    </interactant>
    <interactant intactId="EBI-2852148">
        <id>Q9H2L4</id>
        <label>TMEM60</label>
    </interactant>
    <organismsDiffer>false</organismsDiffer>
    <experiments>3</experiments>
</comment>
<comment type="interaction">
    <interactant intactId="EBI-726491">
        <id>Q9NY26</id>
    </interactant>
    <interactant intactId="EBI-11988865">
        <id>A5PKU2</id>
        <label>TUSC5</label>
    </interactant>
    <organismsDiffer>false</organismsDiffer>
    <experiments>3</experiments>
</comment>
<comment type="interaction">
    <interactant intactId="EBI-726491">
        <id>Q9NY26</id>
    </interactant>
    <interactant intactId="EBI-751210">
        <id>Q96EC8</id>
        <label>YIPF6</label>
    </interactant>
    <organismsDiffer>false</organismsDiffer>
    <experiments>3</experiments>
</comment>
<comment type="subcellular location">
    <subcellularLocation>
        <location evidence="3 4 7">Cell membrane</location>
        <topology evidence="1">Multi-pass membrane protein</topology>
    </subcellularLocation>
    <subcellularLocation>
        <location evidence="4">Endoplasmic reticulum membrane</location>
        <topology evidence="1">Multi-pass membrane protein</topology>
    </subcellularLocation>
    <text evidence="4">Shows a vesicular localization corresponding partially to the endoplasmic reticulum in several epithelial cell lines.</text>
</comment>
<comment type="alternative products">
    <event type="alternative splicing"/>
    <isoform>
        <id>Q9NY26-1</id>
        <name>1</name>
        <sequence type="displayed"/>
    </isoform>
    <isoform>
        <id>Q9NY26-2</id>
        <name>2</name>
        <sequence type="described" ref="VSP_056522"/>
    </isoform>
</comment>
<comment type="tissue specificity">
    <text evidence="2 3">Ubiquitous (PubMed:10610721, PubMed:11301334). Expressed in most adult and fetal tissues including the epidermis.</text>
</comment>
<comment type="induction">
    <text evidence="6">Down-regulated in prostate cancer.</text>
</comment>
<comment type="miscellaneous">
    <text>Inhibited by Ni(2+) ions. Fe(2+) ions do not inhibit zinc uptake.</text>
</comment>
<comment type="similarity">
    <text evidence="10">Belongs to the ZIP transporter (TC 2.A.5) family.</text>
</comment>
<comment type="sequence caution" evidence="10">
    <conflict type="frameshift">
        <sequence resource="EMBL-CDS" id="AAD27717"/>
    </conflict>
</comment>
<comment type="online information" name="Atlas of Genetics and Cytogenetics in Oncology and Haematology">
    <link uri="https://atlasgeneticsoncology.org/gene/46571/SLC39A1"/>
</comment>
<protein>
    <recommendedName>
        <fullName>Zinc transporter ZIP1</fullName>
    </recommendedName>
    <alternativeName>
        <fullName>Solute carrier family 39 member 1</fullName>
    </alternativeName>
    <alternativeName>
        <fullName>Zinc-iron-regulated transporter-like</fullName>
    </alternativeName>
    <alternativeName>
        <fullName>Zrt- and Irt-like protein 1</fullName>
        <shortName>ZIP-1</shortName>
        <shortName>hZIP1</shortName>
    </alternativeName>
</protein>
<evidence type="ECO:0000255" key="1"/>
<evidence type="ECO:0000269" key="2">
    <source>
    </source>
</evidence>
<evidence type="ECO:0000269" key="3">
    <source>
    </source>
</evidence>
<evidence type="ECO:0000269" key="4">
    <source>
    </source>
</evidence>
<evidence type="ECO:0000269" key="5">
    <source>
    </source>
</evidence>
<evidence type="ECO:0000269" key="6">
    <source>
    </source>
</evidence>
<evidence type="ECO:0000269" key="7">
    <source>
    </source>
</evidence>
<evidence type="ECO:0000303" key="8">
    <source>
    </source>
</evidence>
<evidence type="ECO:0000303" key="9">
    <source>
    </source>
</evidence>
<evidence type="ECO:0000305" key="10"/>
<evidence type="ECO:0000305" key="11">
    <source>
    </source>
</evidence>
<evidence type="ECO:0000312" key="12">
    <source>
        <dbReference type="HGNC" id="HGNC:12876"/>
    </source>
</evidence>
<keyword id="KW-0025">Alternative splicing</keyword>
<keyword id="KW-1003">Cell membrane</keyword>
<keyword id="KW-0256">Endoplasmic reticulum</keyword>
<keyword id="KW-0406">Ion transport</keyword>
<keyword id="KW-0472">Membrane</keyword>
<keyword id="KW-1267">Proteomics identification</keyword>
<keyword id="KW-1185">Reference proteome</keyword>
<keyword id="KW-0812">Transmembrane</keyword>
<keyword id="KW-1133">Transmembrane helix</keyword>
<keyword id="KW-0813">Transport</keyword>
<keyword id="KW-0862">Zinc</keyword>
<keyword id="KW-0864">Zinc transport</keyword>
<accession>Q9NY26</accession>
<accession>B4DDY7</accession>
<accession>Q5T4K1</accession>
<accession>Q8N2H7</accession>
<accession>Q9BTV0</accession>
<accession>Q9UBI7</accession>
<accession>Q9Y2Z7</accession>
<accession>Q9Y380</accession>
<proteinExistence type="evidence at protein level"/>
<reference key="1">
    <citation type="journal article" date="1999" name="Genomics">
        <title>Isolation and characterization of human and mouse ZIRTL, a member of the IRT1 family of transporters, mapping within the epidermal differentiation complex.</title>
        <authorList>
            <person name="Lioumi M."/>
            <person name="Ferguson C.A."/>
            <person name="Sharpe P.T."/>
            <person name="Freeman T."/>
            <person name="Marenholz I."/>
            <person name="Mischke D."/>
            <person name="Heizmann C."/>
            <person name="Ragoussis J."/>
        </authorList>
    </citation>
    <scope>NUCLEOTIDE SEQUENCE [GENOMIC DNA / MRNA] (ISOFORM 1)</scope>
    <scope>TISSUE SPECIFICITY</scope>
</reference>
<reference key="2">
    <citation type="journal article" date="2001" name="FEBS Lett.">
        <title>Differential subcellular localization of hZip1 in adherent and non-adherent cells.</title>
        <authorList>
            <person name="Milon B."/>
            <person name="Dhermy D."/>
            <person name="Pountney D."/>
            <person name="Bourgeois M."/>
            <person name="Beaumont C."/>
        </authorList>
    </citation>
    <scope>NUCLEOTIDE SEQUENCE [MRNA] (ISOFORM 1)</scope>
    <scope>SUBCELLULAR LOCATION</scope>
</reference>
<reference key="3">
    <citation type="journal article" date="2000" name="Genome Res.">
        <title>Identification of novel human genes evolutionarily conserved in Caenorhabditis elegans by comparative proteomics.</title>
        <authorList>
            <person name="Lai C.-H."/>
            <person name="Chou C.-Y."/>
            <person name="Ch'ang L.-Y."/>
            <person name="Liu C.-S."/>
            <person name="Lin W.-C."/>
        </authorList>
    </citation>
    <scope>NUCLEOTIDE SEQUENCE [LARGE SCALE MRNA] (ISOFORM 1)</scope>
</reference>
<reference key="4">
    <citation type="journal article" date="2004" name="Nat. Genet.">
        <title>Complete sequencing and characterization of 21,243 full-length human cDNAs.</title>
        <authorList>
            <person name="Ota T."/>
            <person name="Suzuki Y."/>
            <person name="Nishikawa T."/>
            <person name="Otsuki T."/>
            <person name="Sugiyama T."/>
            <person name="Irie R."/>
            <person name="Wakamatsu A."/>
            <person name="Hayashi K."/>
            <person name="Sato H."/>
            <person name="Nagai K."/>
            <person name="Kimura K."/>
            <person name="Makita H."/>
            <person name="Sekine M."/>
            <person name="Obayashi M."/>
            <person name="Nishi T."/>
            <person name="Shibahara T."/>
            <person name="Tanaka T."/>
            <person name="Ishii S."/>
            <person name="Yamamoto J."/>
            <person name="Saito K."/>
            <person name="Kawai Y."/>
            <person name="Isono Y."/>
            <person name="Nakamura Y."/>
            <person name="Nagahari K."/>
            <person name="Murakami K."/>
            <person name="Yasuda T."/>
            <person name="Iwayanagi T."/>
            <person name="Wagatsuma M."/>
            <person name="Shiratori A."/>
            <person name="Sudo H."/>
            <person name="Hosoiri T."/>
            <person name="Kaku Y."/>
            <person name="Kodaira H."/>
            <person name="Kondo H."/>
            <person name="Sugawara M."/>
            <person name="Takahashi M."/>
            <person name="Kanda K."/>
            <person name="Yokoi T."/>
            <person name="Furuya T."/>
            <person name="Kikkawa E."/>
            <person name="Omura Y."/>
            <person name="Abe K."/>
            <person name="Kamihara K."/>
            <person name="Katsuta N."/>
            <person name="Sato K."/>
            <person name="Tanikawa M."/>
            <person name="Yamazaki M."/>
            <person name="Ninomiya K."/>
            <person name="Ishibashi T."/>
            <person name="Yamashita H."/>
            <person name="Murakawa K."/>
            <person name="Fujimori K."/>
            <person name="Tanai H."/>
            <person name="Kimata M."/>
            <person name="Watanabe M."/>
            <person name="Hiraoka S."/>
            <person name="Chiba Y."/>
            <person name="Ishida S."/>
            <person name="Ono Y."/>
            <person name="Takiguchi S."/>
            <person name="Watanabe S."/>
            <person name="Yosida M."/>
            <person name="Hotuta T."/>
            <person name="Kusano J."/>
            <person name="Kanehori K."/>
            <person name="Takahashi-Fujii A."/>
            <person name="Hara H."/>
            <person name="Tanase T.-O."/>
            <person name="Nomura Y."/>
            <person name="Togiya S."/>
            <person name="Komai F."/>
            <person name="Hara R."/>
            <person name="Takeuchi K."/>
            <person name="Arita M."/>
            <person name="Imose N."/>
            <person name="Musashino K."/>
            <person name="Yuuki H."/>
            <person name="Oshima A."/>
            <person name="Sasaki N."/>
            <person name="Aotsuka S."/>
            <person name="Yoshikawa Y."/>
            <person name="Matsunawa H."/>
            <person name="Ichihara T."/>
            <person name="Shiohata N."/>
            <person name="Sano S."/>
            <person name="Moriya S."/>
            <person name="Momiyama H."/>
            <person name="Satoh N."/>
            <person name="Takami S."/>
            <person name="Terashima Y."/>
            <person name="Suzuki O."/>
            <person name="Nakagawa S."/>
            <person name="Senoh A."/>
            <person name="Mizoguchi H."/>
            <person name="Goto Y."/>
            <person name="Shimizu F."/>
            <person name="Wakebe H."/>
            <person name="Hishigaki H."/>
            <person name="Watanabe T."/>
            <person name="Sugiyama A."/>
            <person name="Takemoto M."/>
            <person name="Kawakami B."/>
            <person name="Yamazaki M."/>
            <person name="Watanabe K."/>
            <person name="Kumagai A."/>
            <person name="Itakura S."/>
            <person name="Fukuzumi Y."/>
            <person name="Fujimori Y."/>
            <person name="Komiyama M."/>
            <person name="Tashiro H."/>
            <person name="Tanigami A."/>
            <person name="Fujiwara T."/>
            <person name="Ono T."/>
            <person name="Yamada K."/>
            <person name="Fujii Y."/>
            <person name="Ozaki K."/>
            <person name="Hirao M."/>
            <person name="Ohmori Y."/>
            <person name="Kawabata A."/>
            <person name="Hikiji T."/>
            <person name="Kobatake N."/>
            <person name="Inagaki H."/>
            <person name="Ikema Y."/>
            <person name="Okamoto S."/>
            <person name="Okitani R."/>
            <person name="Kawakami T."/>
            <person name="Noguchi S."/>
            <person name="Itoh T."/>
            <person name="Shigeta K."/>
            <person name="Senba T."/>
            <person name="Matsumura K."/>
            <person name="Nakajima Y."/>
            <person name="Mizuno T."/>
            <person name="Morinaga M."/>
            <person name="Sasaki M."/>
            <person name="Togashi T."/>
            <person name="Oyama M."/>
            <person name="Hata H."/>
            <person name="Watanabe M."/>
            <person name="Komatsu T."/>
            <person name="Mizushima-Sugano J."/>
            <person name="Satoh T."/>
            <person name="Shirai Y."/>
            <person name="Takahashi Y."/>
            <person name="Nakagawa K."/>
            <person name="Okumura K."/>
            <person name="Nagase T."/>
            <person name="Nomura N."/>
            <person name="Kikuchi H."/>
            <person name="Masuho Y."/>
            <person name="Yamashita R."/>
            <person name="Nakai K."/>
            <person name="Yada T."/>
            <person name="Nakamura Y."/>
            <person name="Ohara O."/>
            <person name="Isogai T."/>
            <person name="Sugano S."/>
        </authorList>
    </citation>
    <scope>NUCLEOTIDE SEQUENCE [LARGE SCALE MRNA] (ISOFORMS 1 AND 2)</scope>
    <source>
        <tissue>Thyroid</tissue>
        <tissue>Urinary bladder</tissue>
    </source>
</reference>
<reference key="5">
    <citation type="journal article" date="2005" name="DNA Res.">
        <title>Signal sequence and keyword trap in silico for selection of full-length human cDNAs encoding secretion or membrane proteins from oligo-capped cDNA libraries.</title>
        <authorList>
            <person name="Otsuki T."/>
            <person name="Ota T."/>
            <person name="Nishikawa T."/>
            <person name="Hayashi K."/>
            <person name="Suzuki Y."/>
            <person name="Yamamoto J."/>
            <person name="Wakamatsu A."/>
            <person name="Kimura K."/>
            <person name="Sakamoto K."/>
            <person name="Hatano N."/>
            <person name="Kawai Y."/>
            <person name="Ishii S."/>
            <person name="Saito K."/>
            <person name="Kojima S."/>
            <person name="Sugiyama T."/>
            <person name="Ono T."/>
            <person name="Okano K."/>
            <person name="Yoshikawa Y."/>
            <person name="Aotsuka S."/>
            <person name="Sasaki N."/>
            <person name="Hattori A."/>
            <person name="Okumura K."/>
            <person name="Nagai K."/>
            <person name="Sugano S."/>
            <person name="Isogai T."/>
        </authorList>
    </citation>
    <scope>NUCLEOTIDE SEQUENCE [LARGE SCALE MRNA] (ISOFORM 1)</scope>
</reference>
<reference key="6">
    <citation type="journal article" date="2006" name="Nature">
        <title>The DNA sequence and biological annotation of human chromosome 1.</title>
        <authorList>
            <person name="Gregory S.G."/>
            <person name="Barlow K.F."/>
            <person name="McLay K.E."/>
            <person name="Kaul R."/>
            <person name="Swarbreck D."/>
            <person name="Dunham A."/>
            <person name="Scott C.E."/>
            <person name="Howe K.L."/>
            <person name="Woodfine K."/>
            <person name="Spencer C.C.A."/>
            <person name="Jones M.C."/>
            <person name="Gillson C."/>
            <person name="Searle S."/>
            <person name="Zhou Y."/>
            <person name="Kokocinski F."/>
            <person name="McDonald L."/>
            <person name="Evans R."/>
            <person name="Phillips K."/>
            <person name="Atkinson A."/>
            <person name="Cooper R."/>
            <person name="Jones C."/>
            <person name="Hall R.E."/>
            <person name="Andrews T.D."/>
            <person name="Lloyd C."/>
            <person name="Ainscough R."/>
            <person name="Almeida J.P."/>
            <person name="Ambrose K.D."/>
            <person name="Anderson F."/>
            <person name="Andrew R.W."/>
            <person name="Ashwell R.I.S."/>
            <person name="Aubin K."/>
            <person name="Babbage A.K."/>
            <person name="Bagguley C.L."/>
            <person name="Bailey J."/>
            <person name="Beasley H."/>
            <person name="Bethel G."/>
            <person name="Bird C.P."/>
            <person name="Bray-Allen S."/>
            <person name="Brown J.Y."/>
            <person name="Brown A.J."/>
            <person name="Buckley D."/>
            <person name="Burton J."/>
            <person name="Bye J."/>
            <person name="Carder C."/>
            <person name="Chapman J.C."/>
            <person name="Clark S.Y."/>
            <person name="Clarke G."/>
            <person name="Clee C."/>
            <person name="Cobley V."/>
            <person name="Collier R.E."/>
            <person name="Corby N."/>
            <person name="Coville G.J."/>
            <person name="Davies J."/>
            <person name="Deadman R."/>
            <person name="Dunn M."/>
            <person name="Earthrowl M."/>
            <person name="Ellington A.G."/>
            <person name="Errington H."/>
            <person name="Frankish A."/>
            <person name="Frankland J."/>
            <person name="French L."/>
            <person name="Garner P."/>
            <person name="Garnett J."/>
            <person name="Gay L."/>
            <person name="Ghori M.R.J."/>
            <person name="Gibson R."/>
            <person name="Gilby L.M."/>
            <person name="Gillett W."/>
            <person name="Glithero R.J."/>
            <person name="Grafham D.V."/>
            <person name="Griffiths C."/>
            <person name="Griffiths-Jones S."/>
            <person name="Grocock R."/>
            <person name="Hammond S."/>
            <person name="Harrison E.S.I."/>
            <person name="Hart E."/>
            <person name="Haugen E."/>
            <person name="Heath P.D."/>
            <person name="Holmes S."/>
            <person name="Holt K."/>
            <person name="Howden P.J."/>
            <person name="Hunt A.R."/>
            <person name="Hunt S.E."/>
            <person name="Hunter G."/>
            <person name="Isherwood J."/>
            <person name="James R."/>
            <person name="Johnson C."/>
            <person name="Johnson D."/>
            <person name="Joy A."/>
            <person name="Kay M."/>
            <person name="Kershaw J.K."/>
            <person name="Kibukawa M."/>
            <person name="Kimberley A.M."/>
            <person name="King A."/>
            <person name="Knights A.J."/>
            <person name="Lad H."/>
            <person name="Laird G."/>
            <person name="Lawlor S."/>
            <person name="Leongamornlert D.A."/>
            <person name="Lloyd D.M."/>
            <person name="Loveland J."/>
            <person name="Lovell J."/>
            <person name="Lush M.J."/>
            <person name="Lyne R."/>
            <person name="Martin S."/>
            <person name="Mashreghi-Mohammadi M."/>
            <person name="Matthews L."/>
            <person name="Matthews N.S.W."/>
            <person name="McLaren S."/>
            <person name="Milne S."/>
            <person name="Mistry S."/>
            <person name="Moore M.J.F."/>
            <person name="Nickerson T."/>
            <person name="O'Dell C.N."/>
            <person name="Oliver K."/>
            <person name="Palmeiri A."/>
            <person name="Palmer S.A."/>
            <person name="Parker A."/>
            <person name="Patel D."/>
            <person name="Pearce A.V."/>
            <person name="Peck A.I."/>
            <person name="Pelan S."/>
            <person name="Phelps K."/>
            <person name="Phillimore B.J."/>
            <person name="Plumb R."/>
            <person name="Rajan J."/>
            <person name="Raymond C."/>
            <person name="Rouse G."/>
            <person name="Saenphimmachak C."/>
            <person name="Sehra H.K."/>
            <person name="Sheridan E."/>
            <person name="Shownkeen R."/>
            <person name="Sims S."/>
            <person name="Skuce C.D."/>
            <person name="Smith M."/>
            <person name="Steward C."/>
            <person name="Subramanian S."/>
            <person name="Sycamore N."/>
            <person name="Tracey A."/>
            <person name="Tromans A."/>
            <person name="Van Helmond Z."/>
            <person name="Wall M."/>
            <person name="Wallis J.M."/>
            <person name="White S."/>
            <person name="Whitehead S.L."/>
            <person name="Wilkinson J.E."/>
            <person name="Willey D.L."/>
            <person name="Williams H."/>
            <person name="Wilming L."/>
            <person name="Wray P.W."/>
            <person name="Wu Z."/>
            <person name="Coulson A."/>
            <person name="Vaudin M."/>
            <person name="Sulston J.E."/>
            <person name="Durbin R.M."/>
            <person name="Hubbard T."/>
            <person name="Wooster R."/>
            <person name="Dunham I."/>
            <person name="Carter N.P."/>
            <person name="McVean G."/>
            <person name="Ross M.T."/>
            <person name="Harrow J."/>
            <person name="Olson M.V."/>
            <person name="Beck S."/>
            <person name="Rogers J."/>
            <person name="Bentley D.R."/>
        </authorList>
    </citation>
    <scope>NUCLEOTIDE SEQUENCE [LARGE SCALE GENOMIC DNA]</scope>
</reference>
<reference key="7">
    <citation type="submission" date="2005-09" db="EMBL/GenBank/DDBJ databases">
        <authorList>
            <person name="Mural R.J."/>
            <person name="Istrail S."/>
            <person name="Sutton G."/>
            <person name="Florea L."/>
            <person name="Halpern A.L."/>
            <person name="Mobarry C.M."/>
            <person name="Lippert R."/>
            <person name="Walenz B."/>
            <person name="Shatkay H."/>
            <person name="Dew I."/>
            <person name="Miller J.R."/>
            <person name="Flanigan M.J."/>
            <person name="Edwards N.J."/>
            <person name="Bolanos R."/>
            <person name="Fasulo D."/>
            <person name="Halldorsson B.V."/>
            <person name="Hannenhalli S."/>
            <person name="Turner R."/>
            <person name="Yooseph S."/>
            <person name="Lu F."/>
            <person name="Nusskern D.R."/>
            <person name="Shue B.C."/>
            <person name="Zheng X.H."/>
            <person name="Zhong F."/>
            <person name="Delcher A.L."/>
            <person name="Huson D.H."/>
            <person name="Kravitz S.A."/>
            <person name="Mouchard L."/>
            <person name="Reinert K."/>
            <person name="Remington K.A."/>
            <person name="Clark A.G."/>
            <person name="Waterman M.S."/>
            <person name="Eichler E.E."/>
            <person name="Adams M.D."/>
            <person name="Hunkapiller M.W."/>
            <person name="Myers E.W."/>
            <person name="Venter J.C."/>
        </authorList>
    </citation>
    <scope>NUCLEOTIDE SEQUENCE [LARGE SCALE GENOMIC DNA]</scope>
</reference>
<reference key="8">
    <citation type="journal article" date="2004" name="Genome Res.">
        <title>The status, quality, and expansion of the NIH full-length cDNA project: the Mammalian Gene Collection (MGC).</title>
        <authorList>
            <consortium name="The MGC Project Team"/>
        </authorList>
    </citation>
    <scope>NUCLEOTIDE SEQUENCE [LARGE SCALE MRNA] (ISOFORM 1)</scope>
    <source>
        <tissue>Kidney</tissue>
        <tissue>Lung</tissue>
        <tissue>Muscle</tissue>
        <tissue>Placenta</tissue>
    </source>
</reference>
<reference key="9">
    <citation type="journal article" date="2001" name="J. Biol. Chem.">
        <title>The human ZIP1 transporter mediates zinc uptake in human K562 erythroleukemia cells.</title>
        <authorList>
            <person name="Gaither L.A."/>
            <person name="Eide D.J."/>
        </authorList>
    </citation>
    <scope>FUNCTION</scope>
    <scope>TRANSPORTER ACTIVITY</scope>
    <scope>BIOPHYSICOCHEMICAL PROPERTIES</scope>
    <scope>SUBCELLULAR LOCATION</scope>
    <scope>TISSUE SPECIFICITY</scope>
</reference>
<reference key="10">
    <citation type="journal article" date="2003" name="J. Inorg. Biochem.">
        <title>Human ZIP1 is a major zinc uptake transporter for the accumulation of zinc in prostate cells.</title>
        <authorList>
            <person name="Franklin R.B."/>
            <person name="Ma J."/>
            <person name="Zou J."/>
            <person name="Guan Z."/>
            <person name="Kukoyi B.I."/>
            <person name="Feng P."/>
            <person name="Costello L.C."/>
        </authorList>
    </citation>
    <scope>FUNCTION</scope>
    <scope>TRANSPORTER ACTIVITY</scope>
</reference>
<reference key="11">
    <citation type="journal article" date="2005" name="Mol. Cancer">
        <title>hZIP1 zinc uptake transporter down regulation and zinc depletion in prostate cancer.</title>
        <authorList>
            <person name="Franklin R.B."/>
            <person name="Feng P."/>
            <person name="Milon B."/>
            <person name="Desouki M.M."/>
            <person name="Singh K.K."/>
            <person name="Kajdacsy-Balla A."/>
            <person name="Bagasra O."/>
            <person name="Costello L.C."/>
        </authorList>
    </citation>
    <scope>INDUCTION</scope>
</reference>
<reference key="12">
    <citation type="journal article" date="2006" name="Biochim. Biophys. Acta">
        <title>Histidine residues in the region between transmembrane domains III and IV of hZip1 are required for zinc transport across the plasma membrane in PC-3 cells.</title>
        <authorList>
            <person name="Milon B."/>
            <person name="Wu Q."/>
            <person name="Zou J."/>
            <person name="Costello L.C."/>
            <person name="Franklin R.B."/>
        </authorList>
    </citation>
    <scope>FUNCTION</scope>
    <scope>TRANSPORTER ACTIVITY</scope>
    <scope>MUTAGENESIS OF HIS-158; HIS-160; HIS-190 AND HIS-217</scope>
    <scope>SUBCELLULAR LOCATION</scope>
</reference>
<reference key="13">
    <citation type="journal article" date="2011" name="BMC Syst. Biol.">
        <title>Initial characterization of the human central proteome.</title>
        <authorList>
            <person name="Burkard T.R."/>
            <person name="Planyavsky M."/>
            <person name="Kaupe I."/>
            <person name="Breitwieser F.P."/>
            <person name="Buerckstuemmer T."/>
            <person name="Bennett K.L."/>
            <person name="Superti-Furga G."/>
            <person name="Colinge J."/>
        </authorList>
    </citation>
    <scope>IDENTIFICATION BY MASS SPECTROMETRY [LARGE SCALE ANALYSIS]</scope>
</reference>
<name>S39A1_HUMAN</name>
<dbReference type="EMBL" id="AJ243649">
    <property type="protein sequence ID" value="CAB59979.1"/>
    <property type="molecule type" value="mRNA"/>
</dbReference>
<dbReference type="EMBL" id="AJ243650">
    <property type="protein sequence ID" value="CAB59980.1"/>
    <property type="molecule type" value="Genomic_DNA"/>
</dbReference>
<dbReference type="EMBL" id="AJ271671">
    <property type="protein sequence ID" value="CAB82784.1"/>
    <property type="molecule type" value="mRNA"/>
</dbReference>
<dbReference type="EMBL" id="AF132942">
    <property type="protein sequence ID" value="AAD27717.1"/>
    <property type="status" value="ALT_FRAME"/>
    <property type="molecule type" value="mRNA"/>
</dbReference>
<dbReference type="EMBL" id="AF151829">
    <property type="protein sequence ID" value="AAD34066.1"/>
    <property type="molecule type" value="mRNA"/>
</dbReference>
<dbReference type="EMBL" id="AK075257">
    <property type="protein sequence ID" value="BAC11502.1"/>
    <property type="molecule type" value="mRNA"/>
</dbReference>
<dbReference type="EMBL" id="AK074943">
    <property type="protein sequence ID" value="BAG52035.1"/>
    <property type="molecule type" value="mRNA"/>
</dbReference>
<dbReference type="EMBL" id="AK293389">
    <property type="protein sequence ID" value="BAG56898.1"/>
    <property type="molecule type" value="mRNA"/>
</dbReference>
<dbReference type="EMBL" id="AL358472">
    <property type="status" value="NOT_ANNOTATED_CDS"/>
    <property type="molecule type" value="Genomic_DNA"/>
</dbReference>
<dbReference type="EMBL" id="CH471121">
    <property type="protein sequence ID" value="EAW53259.1"/>
    <property type="molecule type" value="Genomic_DNA"/>
</dbReference>
<dbReference type="EMBL" id="CH471121">
    <property type="protein sequence ID" value="EAW53261.1"/>
    <property type="molecule type" value="Genomic_DNA"/>
</dbReference>
<dbReference type="EMBL" id="CH471121">
    <property type="protein sequence ID" value="EAW53264.1"/>
    <property type="molecule type" value="Genomic_DNA"/>
</dbReference>
<dbReference type="EMBL" id="CH471121">
    <property type="protein sequence ID" value="EAW53265.1"/>
    <property type="molecule type" value="Genomic_DNA"/>
</dbReference>
<dbReference type="EMBL" id="CH471121">
    <property type="protein sequence ID" value="EAW53267.1"/>
    <property type="molecule type" value="Genomic_DNA"/>
</dbReference>
<dbReference type="EMBL" id="BC002563">
    <property type="protein sequence ID" value="AAH02563.1"/>
    <property type="molecule type" value="mRNA"/>
</dbReference>
<dbReference type="EMBL" id="BC003152">
    <property type="protein sequence ID" value="AAH03152.1"/>
    <property type="molecule type" value="mRNA"/>
</dbReference>
<dbReference type="EMBL" id="BC007886">
    <property type="protein sequence ID" value="AAH07886.1"/>
    <property type="molecule type" value="mRNA"/>
</dbReference>
<dbReference type="EMBL" id="BC014303">
    <property type="protein sequence ID" value="AAH14303.1"/>
    <property type="molecule type" value="mRNA"/>
</dbReference>
<dbReference type="CCDS" id="CCDS1055.1">
    <molecule id="Q9NY26-1"/>
</dbReference>
<dbReference type="RefSeq" id="NP_001258886.1">
    <molecule id="Q9NY26-1"/>
    <property type="nucleotide sequence ID" value="NM_001271957.2"/>
</dbReference>
<dbReference type="RefSeq" id="NP_001258887.1">
    <molecule id="Q9NY26-1"/>
    <property type="nucleotide sequence ID" value="NM_001271958.2"/>
</dbReference>
<dbReference type="RefSeq" id="NP_001258888.1">
    <molecule id="Q9NY26-1"/>
    <property type="nucleotide sequence ID" value="NM_001271959.2"/>
</dbReference>
<dbReference type="RefSeq" id="NP_001258889.1">
    <molecule id="Q9NY26-1"/>
    <property type="nucleotide sequence ID" value="NM_001271960.2"/>
</dbReference>
<dbReference type="RefSeq" id="NP_001258890.1">
    <property type="nucleotide sequence ID" value="NM_001271961.1"/>
</dbReference>
<dbReference type="RefSeq" id="NP_055252.2">
    <molecule id="Q9NY26-1"/>
    <property type="nucleotide sequence ID" value="NM_014437.4"/>
</dbReference>
<dbReference type="RefSeq" id="XP_047273964.1">
    <molecule id="Q9NY26-1"/>
    <property type="nucleotide sequence ID" value="XM_047418008.1"/>
</dbReference>
<dbReference type="RefSeq" id="XP_054191986.1">
    <molecule id="Q9NY26-1"/>
    <property type="nucleotide sequence ID" value="XM_054336011.1"/>
</dbReference>
<dbReference type="SMR" id="Q9NY26"/>
<dbReference type="BioGRID" id="118050">
    <property type="interactions" value="49"/>
</dbReference>
<dbReference type="FunCoup" id="Q9NY26">
    <property type="interactions" value="1014"/>
</dbReference>
<dbReference type="IntAct" id="Q9NY26">
    <property type="interactions" value="32"/>
</dbReference>
<dbReference type="MINT" id="Q9NY26"/>
<dbReference type="STRING" id="9606.ENSP00000357612"/>
<dbReference type="DrugBank" id="DB14533">
    <property type="generic name" value="Zinc chloride"/>
</dbReference>
<dbReference type="DrugBank" id="DB14548">
    <property type="generic name" value="Zinc sulfate, unspecified form"/>
</dbReference>
<dbReference type="TCDB" id="2.A.5.3.2">
    <property type="family name" value="the zinc (zn(2+))-iron (fe(2+)) permease (zip) family"/>
</dbReference>
<dbReference type="GlyGen" id="Q9NY26">
    <property type="glycosylation" value="1 site"/>
</dbReference>
<dbReference type="PhosphoSitePlus" id="Q9NY26"/>
<dbReference type="SwissPalm" id="Q9NY26"/>
<dbReference type="BioMuta" id="SLC39A1"/>
<dbReference type="DMDM" id="37090460"/>
<dbReference type="jPOST" id="Q9NY26"/>
<dbReference type="MassIVE" id="Q9NY26"/>
<dbReference type="PaxDb" id="9606-ENSP00000357612"/>
<dbReference type="PeptideAtlas" id="Q9NY26"/>
<dbReference type="ProteomicsDB" id="3906"/>
<dbReference type="ProteomicsDB" id="83153">
    <molecule id="Q9NY26-1"/>
</dbReference>
<dbReference type="Pumba" id="Q9NY26"/>
<dbReference type="Antibodypedia" id="20389">
    <property type="antibodies" value="107 antibodies from 27 providers"/>
</dbReference>
<dbReference type="DNASU" id="27173"/>
<dbReference type="Ensembl" id="ENST00000310483.10">
    <molecule id="Q9NY26-1"/>
    <property type="protein sequence ID" value="ENSP00000309710.6"/>
    <property type="gene ID" value="ENSG00000143570.19"/>
</dbReference>
<dbReference type="Ensembl" id="ENST00000356205.9">
    <molecule id="Q9NY26-1"/>
    <property type="protein sequence ID" value="ENSP00000348535.4"/>
    <property type="gene ID" value="ENSG00000143570.19"/>
</dbReference>
<dbReference type="Ensembl" id="ENST00000368621.5">
    <molecule id="Q9NY26-1"/>
    <property type="protein sequence ID" value="ENSP00000357610.1"/>
    <property type="gene ID" value="ENSG00000143570.19"/>
</dbReference>
<dbReference type="Ensembl" id="ENST00000368623.7">
    <molecule id="Q9NY26-1"/>
    <property type="protein sequence ID" value="ENSP00000357612.3"/>
    <property type="gene ID" value="ENSG00000143570.19"/>
</dbReference>
<dbReference type="Ensembl" id="ENST00000617697.4">
    <molecule id="Q9NY26-1"/>
    <property type="protein sequence ID" value="ENSP00000479421.1"/>
    <property type="gene ID" value="ENSG00000143570.19"/>
</dbReference>
<dbReference type="Ensembl" id="ENST00000621013.4">
    <molecule id="Q9NY26-1"/>
    <property type="protein sequence ID" value="ENSP00000484182.1"/>
    <property type="gene ID" value="ENSG00000143570.19"/>
</dbReference>
<dbReference type="GeneID" id="27173"/>
<dbReference type="KEGG" id="hsa:27173"/>
<dbReference type="MANE-Select" id="ENST00000356205.9">
    <property type="protein sequence ID" value="ENSP00000348535.4"/>
    <property type="RefSeq nucleotide sequence ID" value="NM_001271958.2"/>
    <property type="RefSeq protein sequence ID" value="NP_001258887.1"/>
</dbReference>
<dbReference type="UCSC" id="uc001fdi.5">
    <molecule id="Q9NY26-1"/>
    <property type="organism name" value="human"/>
</dbReference>
<dbReference type="AGR" id="HGNC:12876"/>
<dbReference type="CTD" id="27173"/>
<dbReference type="DisGeNET" id="27173"/>
<dbReference type="GeneCards" id="SLC39A1"/>
<dbReference type="HGNC" id="HGNC:12876">
    <property type="gene designation" value="SLC39A1"/>
</dbReference>
<dbReference type="HPA" id="ENSG00000143570">
    <property type="expression patterns" value="Low tissue specificity"/>
</dbReference>
<dbReference type="MalaCards" id="SLC39A1"/>
<dbReference type="MIM" id="604740">
    <property type="type" value="gene"/>
</dbReference>
<dbReference type="neXtProt" id="NX_Q9NY26"/>
<dbReference type="OpenTargets" id="ENSG00000143570"/>
<dbReference type="PharmGKB" id="PA37465"/>
<dbReference type="VEuPathDB" id="HostDB:ENSG00000143570"/>
<dbReference type="eggNOG" id="KOG1558">
    <property type="taxonomic scope" value="Eukaryota"/>
</dbReference>
<dbReference type="GeneTree" id="ENSGT00940000157062"/>
<dbReference type="InParanoid" id="Q9NY26"/>
<dbReference type="OMA" id="HEMSHTH"/>
<dbReference type="OrthoDB" id="448280at2759"/>
<dbReference type="PAN-GO" id="Q9NY26">
    <property type="GO annotations" value="3 GO annotations based on evolutionary models"/>
</dbReference>
<dbReference type="PhylomeDB" id="Q9NY26"/>
<dbReference type="TreeFam" id="TF317098"/>
<dbReference type="PathwayCommons" id="Q9NY26"/>
<dbReference type="Reactome" id="R-HSA-442380">
    <property type="pathway name" value="Zinc influx into cells by the SLC39 gene family"/>
</dbReference>
<dbReference type="SignaLink" id="Q9NY26"/>
<dbReference type="BioGRID-ORCS" id="27173">
    <property type="hits" value="28 hits in 1163 CRISPR screens"/>
</dbReference>
<dbReference type="CD-CODE" id="6F24707C">
    <property type="entry name" value="Cajal body"/>
</dbReference>
<dbReference type="ChiTaRS" id="SLC39A1">
    <property type="organism name" value="human"/>
</dbReference>
<dbReference type="GeneWiki" id="SLC39A1"/>
<dbReference type="GenomeRNAi" id="27173"/>
<dbReference type="Pharos" id="Q9NY26">
    <property type="development level" value="Tbio"/>
</dbReference>
<dbReference type="PRO" id="PR:Q9NY26"/>
<dbReference type="Proteomes" id="UP000005640">
    <property type="component" value="Chromosome 1"/>
</dbReference>
<dbReference type="RNAct" id="Q9NY26">
    <property type="molecule type" value="protein"/>
</dbReference>
<dbReference type="Bgee" id="ENSG00000143570">
    <property type="expression patterns" value="Expressed in placenta and 97 other cell types or tissues"/>
</dbReference>
<dbReference type="ExpressionAtlas" id="Q9NY26">
    <property type="expression patterns" value="baseline and differential"/>
</dbReference>
<dbReference type="GO" id="GO:0005789">
    <property type="term" value="C:endoplasmic reticulum membrane"/>
    <property type="evidence" value="ECO:0007669"/>
    <property type="project" value="UniProtKB-SubCell"/>
</dbReference>
<dbReference type="GO" id="GO:0016020">
    <property type="term" value="C:membrane"/>
    <property type="evidence" value="ECO:0000304"/>
    <property type="project" value="ProtInc"/>
</dbReference>
<dbReference type="GO" id="GO:0005886">
    <property type="term" value="C:plasma membrane"/>
    <property type="evidence" value="ECO:0000314"/>
    <property type="project" value="UniProtKB"/>
</dbReference>
<dbReference type="GO" id="GO:0022890">
    <property type="term" value="F:inorganic cation transmembrane transporter activity"/>
    <property type="evidence" value="ECO:0000304"/>
    <property type="project" value="ProtInc"/>
</dbReference>
<dbReference type="GO" id="GO:0005102">
    <property type="term" value="F:signaling receptor binding"/>
    <property type="evidence" value="ECO:0007669"/>
    <property type="project" value="Ensembl"/>
</dbReference>
<dbReference type="GO" id="GO:0005385">
    <property type="term" value="F:zinc ion transmembrane transporter activity"/>
    <property type="evidence" value="ECO:0000314"/>
    <property type="project" value="UniProtKB"/>
</dbReference>
<dbReference type="GO" id="GO:0048701">
    <property type="term" value="P:embryonic cranial skeleton morphogenesis"/>
    <property type="evidence" value="ECO:0007669"/>
    <property type="project" value="Ensembl"/>
</dbReference>
<dbReference type="GO" id="GO:0001701">
    <property type="term" value="P:in utero embryonic development"/>
    <property type="evidence" value="ECO:0007669"/>
    <property type="project" value="Ensembl"/>
</dbReference>
<dbReference type="GO" id="GO:0060173">
    <property type="term" value="P:limb development"/>
    <property type="evidence" value="ECO:0007669"/>
    <property type="project" value="Ensembl"/>
</dbReference>
<dbReference type="GO" id="GO:0006812">
    <property type="term" value="P:monoatomic cation transport"/>
    <property type="evidence" value="ECO:0000304"/>
    <property type="project" value="ProtInc"/>
</dbReference>
<dbReference type="GO" id="GO:0071577">
    <property type="term" value="P:zinc ion transmembrane transport"/>
    <property type="evidence" value="ECO:0000314"/>
    <property type="project" value="UniProtKB"/>
</dbReference>
<dbReference type="InterPro" id="IPR003689">
    <property type="entry name" value="ZIP"/>
</dbReference>
<dbReference type="PANTHER" id="PTHR11040:SF58">
    <property type="entry name" value="ZINC TRANSPORTER ZIP1"/>
    <property type="match status" value="1"/>
</dbReference>
<dbReference type="PANTHER" id="PTHR11040">
    <property type="entry name" value="ZINC/IRON TRANSPORTER"/>
    <property type="match status" value="1"/>
</dbReference>
<dbReference type="Pfam" id="PF02535">
    <property type="entry name" value="Zip"/>
    <property type="match status" value="1"/>
</dbReference>
<feature type="chain" id="PRO_0000068763" description="Zinc transporter ZIP1">
    <location>
        <begin position="1"/>
        <end position="324"/>
    </location>
</feature>
<feature type="topological domain" description="Extracellular" evidence="1">
    <location>
        <begin position="1"/>
        <end position="30"/>
    </location>
</feature>
<feature type="transmembrane region" description="Helical" evidence="1">
    <location>
        <begin position="31"/>
        <end position="51"/>
    </location>
</feature>
<feature type="topological domain" description="Cytoplasmic" evidence="1">
    <location>
        <begin position="52"/>
        <end position="68"/>
    </location>
</feature>
<feature type="transmembrane region" description="Helical" evidence="1">
    <location>
        <begin position="69"/>
        <end position="89"/>
    </location>
</feature>
<feature type="topological domain" description="Extracellular" evidence="1">
    <location>
        <begin position="90"/>
        <end position="104"/>
    </location>
</feature>
<feature type="transmembrane region" description="Helical" evidence="1">
    <location>
        <begin position="105"/>
        <end position="125"/>
    </location>
</feature>
<feature type="topological domain" description="Cytoplasmic" evidence="1">
    <location>
        <begin position="126"/>
        <end position="179"/>
    </location>
</feature>
<feature type="transmembrane region" description="Helical" evidence="1">
    <location>
        <begin position="180"/>
        <end position="200"/>
    </location>
</feature>
<feature type="topological domain" description="Extracellular" evidence="1">
    <location>
        <begin position="201"/>
        <end position="206"/>
    </location>
</feature>
<feature type="transmembrane region" description="Helical" evidence="1">
    <location>
        <begin position="207"/>
        <end position="227"/>
    </location>
</feature>
<feature type="topological domain" description="Cytoplasmic" evidence="1">
    <location>
        <begin position="228"/>
        <end position="237"/>
    </location>
</feature>
<feature type="transmembrane region" description="Helical" evidence="1">
    <location>
        <begin position="238"/>
        <end position="258"/>
    </location>
</feature>
<feature type="topological domain" description="Extracellular" evidence="1">
    <location>
        <begin position="259"/>
        <end position="272"/>
    </location>
</feature>
<feature type="transmembrane region" description="Helical" evidence="1">
    <location>
        <begin position="273"/>
        <end position="293"/>
    </location>
</feature>
<feature type="topological domain" description="Cytoplasmic" evidence="1">
    <location>
        <begin position="294"/>
        <end position="303"/>
    </location>
</feature>
<feature type="transmembrane region" description="Helical" evidence="1">
    <location>
        <begin position="304"/>
        <end position="324"/>
    </location>
</feature>
<feature type="splice variant" id="VSP_056522" description="In isoform 2." evidence="9">
    <original>MGPWGEPELLVWRPEAVASEPPVPVGLEVKLGALVLLLVLTLLCSLVPICVLRRPGANHEGSASRQKALSLVSCFAGGVFLATCLLDLLPDYLAAIDEALAALHVT</original>
    <variation>MKAQ</variation>
    <location>
        <begin position="1"/>
        <end position="106"/>
    </location>
</feature>
<feature type="mutagenesis site" description="Does not affect membrane localization; when associated with A-160. Decreases zinc uptake; when associated with A-160." evidence="7">
    <original>H</original>
    <variation>A</variation>
    <location>
        <position position="158"/>
    </location>
</feature>
<feature type="mutagenesis site" description="Does not affect membrane localization; when associated with A-158. Decreases zinc uptake; when associated with A-158." evidence="7">
    <original>H</original>
    <variation>A</variation>
    <location>
        <position position="160"/>
    </location>
</feature>
<feature type="mutagenesis site" description="Does not affect membrane localization. Decreases zinc uptake." evidence="7">
    <original>H</original>
    <variation>A</variation>
    <location>
        <position position="190"/>
    </location>
</feature>
<feature type="mutagenesis site" description="Does not affect membrane localization. Decreases zinc uptake." evidence="7">
    <original>H</original>
    <variation>A</variation>
    <location>
        <position position="217"/>
    </location>
</feature>
<feature type="sequence conflict" description="In Ref. 3; AAD34066." evidence="10" ref="3">
    <original>LVWRPEAVA</original>
    <variation>HGVAPRGGT</variation>
    <location>
        <begin position="10"/>
        <end position="18"/>
    </location>
</feature>
<feature type="sequence conflict" description="In Ref. 8; AAH03152." evidence="10" ref="8">
    <original>A</original>
    <variation>S</variation>
    <location>
        <position position="16"/>
    </location>
</feature>
<feature type="sequence conflict" description="In Ref. 1; CAB59979/CAB59980." evidence="10" ref="1">
    <original>VPIC</original>
    <variation>GSIG</variation>
    <location>
        <begin position="47"/>
        <end position="50"/>
    </location>
</feature>
<feature type="sequence conflict" description="In Ref. 1; CAB59979/CAB59980." evidence="10" ref="1">
    <original>P</original>
    <variation>T</variation>
    <location>
        <position position="55"/>
    </location>
</feature>
<feature type="sequence conflict" description="In Ref. 3; AAD27717/AAD34066." evidence="10" ref="3">
    <original>F</original>
    <variation>V</variation>
    <location>
        <position position="120"/>
    </location>
</feature>
<feature type="sequence conflict" description="In Ref. 4; BAC11502." evidence="10" ref="4">
    <original>R</original>
    <variation>G</variation>
    <location>
        <position position="302"/>
    </location>
</feature>
<sequence length="324" mass="34250">MGPWGEPELLVWRPEAVASEPPVPVGLEVKLGALVLLLVLTLLCSLVPICVLRRPGANHEGSASRQKALSLVSCFAGGVFLATCLLDLLPDYLAAIDEALAALHVTLQFPLQEFILAMGFFLVLVMEQITLAYKEQSGPSPLEETRALLGTVNGGPQHWHDGPGVPQASGAPATPSALRACVLVFSLALHSVFEGLAVGLQRDRARAMELCLALLLHKGILAVSLSLRLLQSHLRAQVVAGCGILFSCMTPLGIGLGAALAESAGPLHQLAQSVLEGMAAGTFLYITFLEILPQELASSEQRILKVILLLAGFALLTGLLFIQI</sequence>